<keyword id="KW-0002">3D-structure</keyword>
<keyword id="KW-0131">Cell cycle</keyword>
<keyword id="KW-0132">Cell division</keyword>
<keyword id="KW-0137">Centromere</keyword>
<keyword id="KW-0158">Chromosome</keyword>
<keyword id="KW-0995">Kinetochore</keyword>
<keyword id="KW-0469">Meiosis</keyword>
<keyword id="KW-0498">Mitosis</keyword>
<keyword id="KW-0539">Nucleus</keyword>
<keyword id="KW-1185">Reference proteome</keyword>
<evidence type="ECO:0000269" key="1">
    <source>
    </source>
</evidence>
<evidence type="ECO:0000269" key="2">
    <source>
    </source>
</evidence>
<evidence type="ECO:0000269" key="3">
    <source>
    </source>
</evidence>
<evidence type="ECO:0000269" key="4">
    <source>
    </source>
</evidence>
<evidence type="ECO:0000269" key="5">
    <source>
    </source>
</evidence>
<evidence type="ECO:0000269" key="6">
    <source>
    </source>
</evidence>
<evidence type="ECO:0000303" key="7">
    <source>
    </source>
</evidence>
<evidence type="ECO:0000305" key="8"/>
<evidence type="ECO:0007829" key="9">
    <source>
        <dbReference type="PDB" id="4JE3"/>
    </source>
</evidence>
<evidence type="ECO:0007829" key="10">
    <source>
        <dbReference type="PDB" id="6QLF"/>
    </source>
</evidence>
<evidence type="ECO:0007829" key="11">
    <source>
        <dbReference type="PDB" id="8OVW"/>
    </source>
</evidence>
<organism>
    <name type="scientific">Saccharomyces cerevisiae (strain ATCC 204508 / S288c)</name>
    <name type="common">Baker's yeast</name>
    <dbReference type="NCBI Taxonomy" id="559292"/>
    <lineage>
        <taxon>Eukaryota</taxon>
        <taxon>Fungi</taxon>
        <taxon>Dikarya</taxon>
        <taxon>Ascomycota</taxon>
        <taxon>Saccharomycotina</taxon>
        <taxon>Saccharomycetes</taxon>
        <taxon>Saccharomycetales</taxon>
        <taxon>Saccharomycetaceae</taxon>
        <taxon>Saccharomyces</taxon>
    </lineage>
</organism>
<comment type="function">
    <text evidence="6">Component of the kinetochore, a multiprotein complex that assembles on centromeric DNA and attaches chromosomes to spindle microtubules, mediating chromosome segregation and sister chromatid segregation during meiosis and mitosis. Component of the inner kinetochore constitutive centromere-associated network (CCAN), which serves as a structural platform for outer kinetochore assembly.</text>
</comment>
<comment type="subunit">
    <text evidence="1 2 4 5">Forms a heterodimer with IML3 (PubMed:12589047, PubMed:24075991). CHL4-IML3 is part of a larger constitutive centromere-associated network (CCAN) (also known as central kinetochore CTF19 complex in yeast), which is composed of at least AME1, CHL4, CNN1, CTF3, CTF19, IML3, MCM16, MCM21, MCM22, MHF1, MHF2, MIF2, NKP1, NKP2, OKP1 and WIP1 (PubMed:12408861, PubMed:22561346). Interacts with CTF3 and CTF19 (PubMed:12589047).</text>
</comment>
<comment type="subcellular location">
    <subcellularLocation>
        <location evidence="2">Nucleus</location>
    </subcellularLocation>
    <subcellularLocation>
        <location evidence="2">Chromosome</location>
        <location evidence="2">Centromere</location>
        <location evidence="2">Kinetochore</location>
    </subcellularLocation>
    <text>Associated with kinetochores.</text>
</comment>
<comment type="miscellaneous">
    <text evidence="3">Present with 606 molecules/cell in log phase SD medium.</text>
</comment>
<comment type="similarity">
    <text evidence="8">Belongs to the CENP-N/CHL4 family.</text>
</comment>
<dbReference type="EMBL" id="S63181">
    <property type="protein sequence ID" value="AAB27309.1"/>
    <property type="molecule type" value="Genomic_DNA"/>
</dbReference>
<dbReference type="EMBL" id="M92290">
    <property type="protein sequence ID" value="AAA16452.1"/>
    <property type="molecule type" value="Unassigned_DNA"/>
</dbReference>
<dbReference type="EMBL" id="Z70202">
    <property type="protein sequence ID" value="CAA94093.1"/>
    <property type="molecule type" value="Genomic_DNA"/>
</dbReference>
<dbReference type="EMBL" id="Z68329">
    <property type="protein sequence ID" value="CAA92711.1"/>
    <property type="molecule type" value="Genomic_DNA"/>
</dbReference>
<dbReference type="EMBL" id="BK006938">
    <property type="protein sequence ID" value="DAA12094.1"/>
    <property type="molecule type" value="Genomic_DNA"/>
</dbReference>
<dbReference type="PIR" id="S52594">
    <property type="entry name" value="S52594"/>
</dbReference>
<dbReference type="RefSeq" id="NP_010540.3">
    <property type="nucleotide sequence ID" value="NM_001180562.3"/>
</dbReference>
<dbReference type="PDB" id="4JE3">
    <property type="method" value="X-ray"/>
    <property type="resolution" value="2.28 A"/>
    <property type="chains" value="B=361-458"/>
</dbReference>
<dbReference type="PDB" id="6NUW">
    <property type="method" value="EM"/>
    <property type="resolution" value="4.25 A"/>
    <property type="chains" value="E=1-458"/>
</dbReference>
<dbReference type="PDB" id="6QLD">
    <property type="method" value="EM"/>
    <property type="resolution" value="4.15 A"/>
    <property type="chains" value="N=5-451"/>
</dbReference>
<dbReference type="PDB" id="6QLE">
    <property type="method" value="EM"/>
    <property type="resolution" value="3.55 A"/>
    <property type="chains" value="N=1-458"/>
</dbReference>
<dbReference type="PDB" id="6QLF">
    <property type="method" value="EM"/>
    <property type="resolution" value="3.45 A"/>
    <property type="chains" value="N=1-458"/>
</dbReference>
<dbReference type="PDB" id="8OVW">
    <property type="method" value="EM"/>
    <property type="resolution" value="3.40 A"/>
    <property type="chains" value="N=1-458"/>
</dbReference>
<dbReference type="PDB" id="8OW0">
    <property type="method" value="EM"/>
    <property type="resolution" value="3.40 A"/>
    <property type="chains" value="N=1-458"/>
</dbReference>
<dbReference type="PDB" id="8OW1">
    <property type="method" value="EM"/>
    <property type="resolution" value="3.70 A"/>
    <property type="chains" value="N/NN=1-458"/>
</dbReference>
<dbReference type="PDBsum" id="4JE3"/>
<dbReference type="PDBsum" id="6NUW"/>
<dbReference type="PDBsum" id="6QLD"/>
<dbReference type="PDBsum" id="6QLE"/>
<dbReference type="PDBsum" id="6QLF"/>
<dbReference type="PDBsum" id="8OVW"/>
<dbReference type="PDBsum" id="8OW0"/>
<dbReference type="PDBsum" id="8OW1"/>
<dbReference type="EMDB" id="EMD-0523"/>
<dbReference type="EMDB" id="EMD-17224"/>
<dbReference type="EMDB" id="EMD-17226"/>
<dbReference type="EMDB" id="EMD-17227"/>
<dbReference type="EMDB" id="EMD-4579"/>
<dbReference type="EMDB" id="EMD-4580"/>
<dbReference type="EMDB" id="EMD-4581"/>
<dbReference type="SMR" id="P38907"/>
<dbReference type="BioGRID" id="32304">
    <property type="interactions" value="227"/>
</dbReference>
<dbReference type="ComplexPortal" id="CPX-1156">
    <property type="entry name" value="Central kinetochore CTF19 complex"/>
</dbReference>
<dbReference type="ComplexPortal" id="CPX-2533">
    <property type="entry name" value="Kinetochore CCAN complex"/>
</dbReference>
<dbReference type="DIP" id="DIP-5659N"/>
<dbReference type="FunCoup" id="P38907">
    <property type="interactions" value="108"/>
</dbReference>
<dbReference type="IntAct" id="P38907">
    <property type="interactions" value="8"/>
</dbReference>
<dbReference type="MINT" id="P38907"/>
<dbReference type="STRING" id="4932.YDR254W"/>
<dbReference type="iPTMnet" id="P38907"/>
<dbReference type="PaxDb" id="4932-YDR254W"/>
<dbReference type="PeptideAtlas" id="P38907"/>
<dbReference type="EnsemblFungi" id="YDR254W_mRNA">
    <property type="protein sequence ID" value="YDR254W"/>
    <property type="gene ID" value="YDR254W"/>
</dbReference>
<dbReference type="GeneID" id="851841"/>
<dbReference type="KEGG" id="sce:YDR254W"/>
<dbReference type="AGR" id="SGD:S000002662"/>
<dbReference type="SGD" id="S000002662">
    <property type="gene designation" value="CHL4"/>
</dbReference>
<dbReference type="VEuPathDB" id="FungiDB:YDR254W"/>
<dbReference type="eggNOG" id="ENOG502QVRZ">
    <property type="taxonomic scope" value="Eukaryota"/>
</dbReference>
<dbReference type="HOGENOM" id="CLU_031572_0_0_1"/>
<dbReference type="InParanoid" id="P38907"/>
<dbReference type="OMA" id="HPASLRW"/>
<dbReference type="OrthoDB" id="6585699at2759"/>
<dbReference type="BioCyc" id="YEAST:G3O-29826-MONOMER"/>
<dbReference type="BioGRID-ORCS" id="851841">
    <property type="hits" value="0 hits in 10 CRISPR screens"/>
</dbReference>
<dbReference type="EvolutionaryTrace" id="P38907"/>
<dbReference type="PRO" id="PR:P38907"/>
<dbReference type="Proteomes" id="UP000002311">
    <property type="component" value="Chromosome IV"/>
</dbReference>
<dbReference type="RNAct" id="P38907">
    <property type="molecule type" value="protein"/>
</dbReference>
<dbReference type="GO" id="GO:0000776">
    <property type="term" value="C:kinetochore"/>
    <property type="evidence" value="ECO:0000353"/>
    <property type="project" value="ComplexPortal"/>
</dbReference>
<dbReference type="GO" id="GO:0005634">
    <property type="term" value="C:nucleus"/>
    <property type="evidence" value="ECO:0007669"/>
    <property type="project" value="UniProtKB-SubCell"/>
</dbReference>
<dbReference type="GO" id="GO:0000940">
    <property type="term" value="C:outer kinetochore"/>
    <property type="evidence" value="ECO:0000314"/>
    <property type="project" value="SGD"/>
</dbReference>
<dbReference type="GO" id="GO:0005198">
    <property type="term" value="F:structural molecule activity"/>
    <property type="evidence" value="ECO:0000315"/>
    <property type="project" value="SGD"/>
</dbReference>
<dbReference type="GO" id="GO:0008608">
    <property type="term" value="P:attachment of spindle microtubules to kinetochore"/>
    <property type="evidence" value="ECO:0000303"/>
    <property type="project" value="ComplexPortal"/>
</dbReference>
<dbReference type="GO" id="GO:0051301">
    <property type="term" value="P:cell division"/>
    <property type="evidence" value="ECO:0007669"/>
    <property type="project" value="UniProtKB-KW"/>
</dbReference>
<dbReference type="GO" id="GO:0034080">
    <property type="term" value="P:CENP-A containing chromatin assembly"/>
    <property type="evidence" value="ECO:0007669"/>
    <property type="project" value="InterPro"/>
</dbReference>
<dbReference type="GO" id="GO:0007059">
    <property type="term" value="P:chromosome segregation"/>
    <property type="evidence" value="ECO:0000315"/>
    <property type="project" value="SGD"/>
</dbReference>
<dbReference type="GO" id="GO:0034089">
    <property type="term" value="P:establishment of meiotic sister chromatid cohesion"/>
    <property type="evidence" value="ECO:0000315"/>
    <property type="project" value="SGD"/>
</dbReference>
<dbReference type="GO" id="GO:0034087">
    <property type="term" value="P:establishment of mitotic sister chromatid cohesion"/>
    <property type="evidence" value="ECO:0000315"/>
    <property type="project" value="SGD"/>
</dbReference>
<dbReference type="GO" id="GO:0051382">
    <property type="term" value="P:kinetochore assembly"/>
    <property type="evidence" value="ECO:0000315"/>
    <property type="project" value="SGD"/>
</dbReference>
<dbReference type="GO" id="GO:0034090">
    <property type="term" value="P:maintenance of meiotic sister chromatid cohesion"/>
    <property type="evidence" value="ECO:0000315"/>
    <property type="project" value="SGD"/>
</dbReference>
<dbReference type="GO" id="GO:0051321">
    <property type="term" value="P:meiotic cell cycle"/>
    <property type="evidence" value="ECO:0007669"/>
    <property type="project" value="UniProtKB-KW"/>
</dbReference>
<dbReference type="GO" id="GO:0007094">
    <property type="term" value="P:mitotic spindle assembly checkpoint signaling"/>
    <property type="evidence" value="ECO:0000315"/>
    <property type="project" value="SGD"/>
</dbReference>
<dbReference type="GO" id="GO:0071459">
    <property type="term" value="P:protein localization to chromosome, centromeric region"/>
    <property type="evidence" value="ECO:0000315"/>
    <property type="project" value="SGD"/>
</dbReference>
<dbReference type="Gene3D" id="3.10.20.720">
    <property type="match status" value="1"/>
</dbReference>
<dbReference type="InterPro" id="IPR007902">
    <property type="entry name" value="Chl4/mis15/CENP-N"/>
</dbReference>
<dbReference type="Pfam" id="PF05238">
    <property type="entry name" value="CENP-N"/>
    <property type="match status" value="1"/>
</dbReference>
<name>CENPN_YEAST</name>
<reference key="1">
    <citation type="journal article" date="1993" name="Mol. Biol. (Mosk.)">
        <title>Stable maintenance of dicentric mini-chromosomes in CHL4 mutants in yeast.</title>
        <authorList>
            <person name="Kouprina N.Y."/>
            <person name="Kroll E.S."/>
            <person name="Koryabin M.Y."/>
            <person name="Bannikov V.M."/>
            <person name="Kirillov A.V."/>
            <person name="Zakharyev V.M."/>
            <person name="Larionov V.L."/>
        </authorList>
    </citation>
    <scope>NUCLEOTIDE SEQUENCE</scope>
    <source>
        <strain>YNK50</strain>
    </source>
</reference>
<reference key="2">
    <citation type="journal article" date="1993" name="Genetics">
        <title>Identification and cloning of the CHL4 gene controlling chromosome segregation in yeast.</title>
        <authorList>
            <person name="Kouprina N.Y."/>
            <person name="Kirillov A.V."/>
            <person name="Kroll E.S."/>
            <person name="Koryabin M.Y."/>
            <person name="Shestopalov B."/>
            <person name="Bannikov V.M."/>
            <person name="Zakharyev V.M."/>
            <person name="Larionov V.L."/>
        </authorList>
    </citation>
    <scope>NUCLEOTIDE SEQUENCE</scope>
    <source>
        <strain>Z4221-3C1</strain>
    </source>
</reference>
<reference key="3">
    <citation type="journal article" date="1997" name="Nature">
        <title>The nucleotide sequence of Saccharomyces cerevisiae chromosome IV.</title>
        <authorList>
            <person name="Jacq C."/>
            <person name="Alt-Moerbe J."/>
            <person name="Andre B."/>
            <person name="Arnold W."/>
            <person name="Bahr A."/>
            <person name="Ballesta J.P.G."/>
            <person name="Bargues M."/>
            <person name="Baron L."/>
            <person name="Becker A."/>
            <person name="Biteau N."/>
            <person name="Bloecker H."/>
            <person name="Blugeon C."/>
            <person name="Boskovic J."/>
            <person name="Brandt P."/>
            <person name="Brueckner M."/>
            <person name="Buitrago M.J."/>
            <person name="Coster F."/>
            <person name="Delaveau T."/>
            <person name="del Rey F."/>
            <person name="Dujon B."/>
            <person name="Eide L.G."/>
            <person name="Garcia-Cantalejo J.M."/>
            <person name="Goffeau A."/>
            <person name="Gomez-Peris A."/>
            <person name="Granotier C."/>
            <person name="Hanemann V."/>
            <person name="Hankeln T."/>
            <person name="Hoheisel J.D."/>
            <person name="Jaeger W."/>
            <person name="Jimenez A."/>
            <person name="Jonniaux J.-L."/>
            <person name="Kraemer C."/>
            <person name="Kuester H."/>
            <person name="Laamanen P."/>
            <person name="Legros Y."/>
            <person name="Louis E.J."/>
            <person name="Moeller-Rieker S."/>
            <person name="Monnet A."/>
            <person name="Moro M."/>
            <person name="Mueller-Auer S."/>
            <person name="Nussbaumer B."/>
            <person name="Paricio N."/>
            <person name="Paulin L."/>
            <person name="Perea J."/>
            <person name="Perez-Alonso M."/>
            <person name="Perez-Ortin J.E."/>
            <person name="Pohl T.M."/>
            <person name="Prydz H."/>
            <person name="Purnelle B."/>
            <person name="Rasmussen S.W."/>
            <person name="Remacha M.A."/>
            <person name="Revuelta J.L."/>
            <person name="Rieger M."/>
            <person name="Salom D."/>
            <person name="Saluz H.P."/>
            <person name="Saiz J.E."/>
            <person name="Saren A.-M."/>
            <person name="Schaefer M."/>
            <person name="Scharfe M."/>
            <person name="Schmidt E.R."/>
            <person name="Schneider C."/>
            <person name="Scholler P."/>
            <person name="Schwarz S."/>
            <person name="Soler-Mira A."/>
            <person name="Urrestarazu L.A."/>
            <person name="Verhasselt P."/>
            <person name="Vissers S."/>
            <person name="Voet M."/>
            <person name="Volckaert G."/>
            <person name="Wagner G."/>
            <person name="Wambutt R."/>
            <person name="Wedler E."/>
            <person name="Wedler H."/>
            <person name="Woelfl S."/>
            <person name="Harris D.E."/>
            <person name="Bowman S."/>
            <person name="Brown D."/>
            <person name="Churcher C.M."/>
            <person name="Connor R."/>
            <person name="Dedman K."/>
            <person name="Gentles S."/>
            <person name="Hamlin N."/>
            <person name="Hunt S."/>
            <person name="Jones L."/>
            <person name="McDonald S."/>
            <person name="Murphy L.D."/>
            <person name="Niblett D."/>
            <person name="Odell C."/>
            <person name="Oliver K."/>
            <person name="Rajandream M.A."/>
            <person name="Richards C."/>
            <person name="Shore L."/>
            <person name="Walsh S.V."/>
            <person name="Barrell B.G."/>
            <person name="Dietrich F.S."/>
            <person name="Mulligan J.T."/>
            <person name="Allen E."/>
            <person name="Araujo R."/>
            <person name="Aviles E."/>
            <person name="Berno A."/>
            <person name="Carpenter J."/>
            <person name="Chen E."/>
            <person name="Cherry J.M."/>
            <person name="Chung E."/>
            <person name="Duncan M."/>
            <person name="Hunicke-Smith S."/>
            <person name="Hyman R.W."/>
            <person name="Komp C."/>
            <person name="Lashkari D."/>
            <person name="Lew H."/>
            <person name="Lin D."/>
            <person name="Mosedale D."/>
            <person name="Nakahara K."/>
            <person name="Namath A."/>
            <person name="Oefner P."/>
            <person name="Oh C."/>
            <person name="Petel F.X."/>
            <person name="Roberts D."/>
            <person name="Schramm S."/>
            <person name="Schroeder M."/>
            <person name="Shogren T."/>
            <person name="Shroff N."/>
            <person name="Winant A."/>
            <person name="Yelton M.A."/>
            <person name="Botstein D."/>
            <person name="Davis R.W."/>
            <person name="Johnston M."/>
            <person name="Andrews S."/>
            <person name="Brinkman R."/>
            <person name="Cooper J."/>
            <person name="Ding H."/>
            <person name="Du Z."/>
            <person name="Favello A."/>
            <person name="Fulton L."/>
            <person name="Gattung S."/>
            <person name="Greco T."/>
            <person name="Hallsworth K."/>
            <person name="Hawkins J."/>
            <person name="Hillier L.W."/>
            <person name="Jier M."/>
            <person name="Johnson D."/>
            <person name="Johnston L."/>
            <person name="Kirsten J."/>
            <person name="Kucaba T."/>
            <person name="Langston Y."/>
            <person name="Latreille P."/>
            <person name="Le T."/>
            <person name="Mardis E."/>
            <person name="Menezes S."/>
            <person name="Miller N."/>
            <person name="Nhan M."/>
            <person name="Pauley A."/>
            <person name="Peluso D."/>
            <person name="Rifkin L."/>
            <person name="Riles L."/>
            <person name="Taich A."/>
            <person name="Trevaskis E."/>
            <person name="Vignati D."/>
            <person name="Wilcox L."/>
            <person name="Wohldman P."/>
            <person name="Vaudin M."/>
            <person name="Wilson R."/>
            <person name="Waterston R."/>
            <person name="Albermann K."/>
            <person name="Hani J."/>
            <person name="Heumann K."/>
            <person name="Kleine K."/>
            <person name="Mewes H.-W."/>
            <person name="Zollner A."/>
            <person name="Zaccaria P."/>
        </authorList>
    </citation>
    <scope>NUCLEOTIDE SEQUENCE [LARGE SCALE GENOMIC DNA]</scope>
    <source>
        <strain>ATCC 204508 / S288c</strain>
    </source>
</reference>
<reference key="4">
    <citation type="journal article" date="2014" name="G3 (Bethesda)">
        <title>The reference genome sequence of Saccharomyces cerevisiae: Then and now.</title>
        <authorList>
            <person name="Engel S.R."/>
            <person name="Dietrich F.S."/>
            <person name="Fisk D.G."/>
            <person name="Binkley G."/>
            <person name="Balakrishnan R."/>
            <person name="Costanzo M.C."/>
            <person name="Dwight S.S."/>
            <person name="Hitz B.C."/>
            <person name="Karra K."/>
            <person name="Nash R.S."/>
            <person name="Weng S."/>
            <person name="Wong E.D."/>
            <person name="Lloyd P."/>
            <person name="Skrzypek M.S."/>
            <person name="Miyasato S.R."/>
            <person name="Simison M."/>
            <person name="Cherry J.M."/>
        </authorList>
    </citation>
    <scope>GENOME REANNOTATION</scope>
    <source>
        <strain>ATCC 204508 / S288c</strain>
    </source>
</reference>
<reference key="5">
    <citation type="journal article" date="1997" name="Curr. Genet.">
        <title>The mcm17 mutation of yeast shows a size-dependent segregational defect of a mini-chromosome.</title>
        <authorList>
            <person name="Roy N."/>
            <person name="Poddar A."/>
            <person name="Lohia A."/>
            <person name="Sinha P."/>
        </authorList>
    </citation>
    <scope>FUNCTION</scope>
</reference>
<reference key="6">
    <citation type="journal article" date="2002" name="Cell">
        <title>Phospho-regulation of kinetochore-microtubule attachments by the Aurora kinase Ipl1p.</title>
        <authorList>
            <person name="Cheeseman I.M."/>
            <person name="Anderson S."/>
            <person name="Jwa M."/>
            <person name="Green E.M."/>
            <person name="Kang J.-S."/>
            <person name="Yates J.R. III"/>
            <person name="Chan C.S.M."/>
            <person name="Drubin D.G."/>
            <person name="Barnes G."/>
        </authorList>
    </citation>
    <scope>IDENTIFICATION BY MASS SPECTROMETRY</scope>
    <scope>COMPONENT OF CTF19 COMPLEX</scope>
</reference>
<reference key="7">
    <citation type="journal article" date="2003" name="Mol. Biol. Cell">
        <title>Chl4p and Iml3p are two new members of the budding yeast outer kinetochore.</title>
        <authorList>
            <person name="Pot I."/>
            <person name="Measday V."/>
            <person name="Snydsman B."/>
            <person name="Cagney G."/>
            <person name="Fields S."/>
            <person name="Davis T.N."/>
            <person name="Muller E.G.D."/>
            <person name="Hieter P."/>
        </authorList>
    </citation>
    <scope>INTERACTION WITH CTF3; CTF19 AND IML3</scope>
    <scope>SUBCELLULAR LOCATION</scope>
</reference>
<reference key="8">
    <citation type="journal article" date="2003" name="Mol. Cell">
        <title>Assigning function to yeast proteins by integration of technologies.</title>
        <authorList>
            <person name="Hazbun T.R."/>
            <person name="Malmstroem L."/>
            <person name="Anderson S."/>
            <person name="Graczyk B.J."/>
            <person name="Fox B."/>
            <person name="Riffle M."/>
            <person name="Sundin B.A."/>
            <person name="Aranda J.D."/>
            <person name="McDonald W.H."/>
            <person name="Chiu C.-H."/>
            <person name="Snydsman B.E."/>
            <person name="Bradley P."/>
            <person name="Muller E.G.D."/>
            <person name="Fields S."/>
            <person name="Baker D."/>
            <person name="Yates J.R. III"/>
            <person name="Davis T.N."/>
        </authorList>
    </citation>
    <scope>IDENTIFICATION BY MASS SPECTROMETRY</scope>
</reference>
<reference key="9">
    <citation type="journal article" date="2003" name="Nature">
        <title>Global analysis of protein expression in yeast.</title>
        <authorList>
            <person name="Ghaemmaghami S."/>
            <person name="Huh W.-K."/>
            <person name="Bower K."/>
            <person name="Howson R.W."/>
            <person name="Belle A."/>
            <person name="Dephoure N."/>
            <person name="O'Shea E.K."/>
            <person name="Weissman J.S."/>
        </authorList>
    </citation>
    <scope>LEVEL OF PROTEIN EXPRESSION [LARGE SCALE ANALYSIS]</scope>
</reference>
<reference key="10">
    <citation type="journal article" date="2012" name="Nat. Cell Biol.">
        <title>CENP-T proteins are conserved centromere receptors of the Ndc80 complex.</title>
        <authorList>
            <person name="Schleiffer A."/>
            <person name="Maier M."/>
            <person name="Litos G."/>
            <person name="Lampert F."/>
            <person name="Hornung P."/>
            <person name="Mechtler K."/>
            <person name="Westermann S."/>
        </authorList>
    </citation>
    <scope>IDENTIFICATION IN CCAN</scope>
    <scope>SUBUNIT</scope>
</reference>
<reference key="11">
    <citation type="journal article" date="2013" name="Cell Rep.">
        <title>An Iml3-Chl4 heterodimer links the core centromere to factors required for accurate chromosome segregation.</title>
        <authorList>
            <person name="Hinshaw S.M."/>
            <person name="Harrison S.C."/>
        </authorList>
    </citation>
    <scope>X-RAY CRYSTALLOGRAPHY (2.28 ANGSTROMS) OF 361-458 IN COMPLEX WITH IML3</scope>
</reference>
<sequence length="458" mass="52672">MSNELRLEDNYVPTSDTLVVFKQLMKLPVTVLYDLTLSWFAKFGGSFDGDIYLLTETLDLLIEKGVRRNVIVNRILYVYWPDGLNVFQLAEIDCHLMISKPEKFKWLPSKALRGDGKPYVVKLQPAKFIENLQTDLAKIYHCHVYMFKHPSLPVLITRIQLFDSNNLFLSTPNIGSINKESLYNKLDKFQGKPLISRRPYYVAFPLNSPIIFHSVDKDIYARLVLQSISRTISERETIIFKPVQKIPVKSIHNIMTLLGPSRFAESMGPWECYASANFERSPLHDYKKHQGLTGKKVMVREFDDSFLNDDENFYGKEEPEIRRLRLEKNMIKFKGSANGVMDQKYNDLKEFNEHVHNIRNGKKNEDSGEPVYISRYSSLVPIEKVGFTLKNEINSRIITIKLKFNGNDIFGGLHELCDKNLINIDKVPGWLAGENGSFSGTIMNGDFQREQVAKGGLL</sequence>
<protein>
    <recommendedName>
        <fullName evidence="8">Inner kinetochore subunit CHL4</fullName>
    </recommendedName>
    <alternativeName>
        <fullName evidence="7">CENP-N homolog</fullName>
    </alternativeName>
    <alternativeName>
        <fullName>Chromosome loss protein 4</fullName>
    </alternativeName>
    <alternativeName>
        <fullName>Chromosome transmission fidelity protein 17</fullName>
    </alternativeName>
    <alternativeName>
        <fullName evidence="8">Constitutive centromere-associated network protein CHL4</fullName>
    </alternativeName>
    <alternativeName>
        <fullName>Minichromosome maintenance protein 17</fullName>
    </alternativeName>
</protein>
<gene>
    <name type="primary">CHL4</name>
    <name type="synonym">CTF17</name>
    <name type="synonym">MCM17</name>
    <name type="ordered locus">YDR254W</name>
    <name type="ORF">YD9320A.04</name>
</gene>
<accession>P38907</accession>
<accession>D6VSN4</accession>
<proteinExistence type="evidence at protein level"/>
<feature type="chain" id="PRO_0000089646" description="Inner kinetochore subunit CHL4">
    <location>
        <begin position="1"/>
        <end position="458"/>
    </location>
</feature>
<feature type="helix" evidence="11">
    <location>
        <begin position="17"/>
        <end position="24"/>
    </location>
</feature>
<feature type="helix" evidence="11">
    <location>
        <begin position="29"/>
        <end position="42"/>
    </location>
</feature>
<feature type="helix" evidence="11">
    <location>
        <begin position="51"/>
        <end position="63"/>
    </location>
</feature>
<feature type="helix" evidence="11">
    <location>
        <begin position="68"/>
        <end position="77"/>
    </location>
</feature>
<feature type="strand" evidence="11">
    <location>
        <begin position="80"/>
        <end position="82"/>
    </location>
</feature>
<feature type="helix" evidence="11">
    <location>
        <begin position="86"/>
        <end position="99"/>
    </location>
</feature>
<feature type="helix" evidence="11">
    <location>
        <begin position="101"/>
        <end position="103"/>
    </location>
</feature>
<feature type="strand" evidence="11">
    <location>
        <begin position="105"/>
        <end position="113"/>
    </location>
</feature>
<feature type="turn" evidence="10">
    <location>
        <begin position="114"/>
        <end position="116"/>
    </location>
</feature>
<feature type="helix" evidence="11">
    <location>
        <begin position="125"/>
        <end position="136"/>
    </location>
</feature>
<feature type="turn" evidence="11">
    <location>
        <begin position="137"/>
        <end position="139"/>
    </location>
</feature>
<feature type="strand" evidence="11">
    <location>
        <begin position="140"/>
        <end position="148"/>
    </location>
</feature>
<feature type="strand" evidence="11">
    <location>
        <begin position="150"/>
        <end position="162"/>
    </location>
</feature>
<feature type="strand" evidence="11">
    <location>
        <begin position="200"/>
        <end position="215"/>
    </location>
</feature>
<feature type="helix" evidence="11">
    <location>
        <begin position="219"/>
        <end position="233"/>
    </location>
</feature>
<feature type="strand" evidence="11">
    <location>
        <begin position="234"/>
        <end position="236"/>
    </location>
</feature>
<feature type="strand" evidence="11">
    <location>
        <begin position="238"/>
        <end position="243"/>
    </location>
</feature>
<feature type="helix" evidence="11">
    <location>
        <begin position="251"/>
        <end position="257"/>
    </location>
</feature>
<feature type="strand" evidence="11">
    <location>
        <begin position="259"/>
        <end position="261"/>
    </location>
</feature>
<feature type="turn" evidence="11">
    <location>
        <begin position="262"/>
        <end position="265"/>
    </location>
</feature>
<feature type="helix" evidence="11">
    <location>
        <begin position="268"/>
        <end position="270"/>
    </location>
</feature>
<feature type="helix" evidence="11">
    <location>
        <begin position="271"/>
        <end position="275"/>
    </location>
</feature>
<feature type="strand" evidence="11">
    <location>
        <begin position="286"/>
        <end position="288"/>
    </location>
</feature>
<feature type="helix" evidence="11">
    <location>
        <begin position="290"/>
        <end position="293"/>
    </location>
</feature>
<feature type="strand" evidence="11">
    <location>
        <begin position="295"/>
        <end position="298"/>
    </location>
</feature>
<feature type="turn" evidence="11">
    <location>
        <begin position="306"/>
        <end position="308"/>
    </location>
</feature>
<feature type="helix" evidence="11">
    <location>
        <begin position="319"/>
        <end position="334"/>
    </location>
</feature>
<feature type="strand" evidence="11">
    <location>
        <begin position="335"/>
        <end position="338"/>
    </location>
</feature>
<feature type="strand" evidence="9">
    <location>
        <begin position="383"/>
        <end position="393"/>
    </location>
</feature>
<feature type="strand" evidence="9">
    <location>
        <begin position="396"/>
        <end position="408"/>
    </location>
</feature>
<feature type="helix" evidence="9">
    <location>
        <begin position="409"/>
        <end position="418"/>
    </location>
</feature>
<feature type="helix" evidence="9">
    <location>
        <begin position="424"/>
        <end position="426"/>
    </location>
</feature>
<feature type="turn" evidence="9">
    <location>
        <begin position="429"/>
        <end position="437"/>
    </location>
</feature>
<feature type="strand" evidence="9">
    <location>
        <begin position="440"/>
        <end position="443"/>
    </location>
</feature>
<feature type="strand" evidence="9">
    <location>
        <begin position="446"/>
        <end position="449"/>
    </location>
</feature>